<organism>
    <name type="scientific">Saccharophagus degradans (strain 2-40 / ATCC 43961 / DSM 17024)</name>
    <dbReference type="NCBI Taxonomy" id="203122"/>
    <lineage>
        <taxon>Bacteria</taxon>
        <taxon>Pseudomonadati</taxon>
        <taxon>Pseudomonadota</taxon>
        <taxon>Gammaproteobacteria</taxon>
        <taxon>Cellvibrionales</taxon>
        <taxon>Cellvibrionaceae</taxon>
        <taxon>Saccharophagus</taxon>
    </lineage>
</organism>
<gene>
    <name evidence="1" type="primary">secB</name>
    <name type="ordered locus">Sde_0497</name>
</gene>
<name>SECB_SACD2</name>
<proteinExistence type="inferred from homology"/>
<feature type="chain" id="PRO_1000062514" description="Protein-export protein SecB">
    <location>
        <begin position="1"/>
        <end position="168"/>
    </location>
</feature>
<sequence length="168" mass="17887">MSEENTTNNEAAAAEGKAPAGFGIKRVFTKDLSFEVPAGLGAFSLQGQPNVGQDLNTQINRVDDTHYEVVLKVTVTVKMGEDKVAFLAEVHQAGIFQVVGIEGPQLQQVLSTACPQILFPYVRETIDSLAVRGGFAPVLLPQINFDALFVQAVAQAKAQADSQAEADA</sequence>
<reference key="1">
    <citation type="journal article" date="2008" name="PLoS Genet.">
        <title>Complete genome sequence of the complex carbohydrate-degrading marine bacterium, Saccharophagus degradans strain 2-40 T.</title>
        <authorList>
            <person name="Weiner R.M."/>
            <person name="Taylor L.E. II"/>
            <person name="Henrissat B."/>
            <person name="Hauser L."/>
            <person name="Land M."/>
            <person name="Coutinho P.M."/>
            <person name="Rancurel C."/>
            <person name="Saunders E.H."/>
            <person name="Longmire A.G."/>
            <person name="Zhang H."/>
            <person name="Bayer E.A."/>
            <person name="Gilbert H.J."/>
            <person name="Larimer F."/>
            <person name="Zhulin I.B."/>
            <person name="Ekborg N.A."/>
            <person name="Lamed R."/>
            <person name="Richardson P.M."/>
            <person name="Borovok I."/>
            <person name="Hutcheson S."/>
        </authorList>
    </citation>
    <scope>NUCLEOTIDE SEQUENCE [LARGE SCALE GENOMIC DNA]</scope>
    <source>
        <strain>2-40 / ATCC 43961 / DSM 17024</strain>
    </source>
</reference>
<protein>
    <recommendedName>
        <fullName evidence="1">Protein-export protein SecB</fullName>
    </recommendedName>
</protein>
<keyword id="KW-0143">Chaperone</keyword>
<keyword id="KW-0963">Cytoplasm</keyword>
<keyword id="KW-0653">Protein transport</keyword>
<keyword id="KW-1185">Reference proteome</keyword>
<keyword id="KW-0811">Translocation</keyword>
<keyword id="KW-0813">Transport</keyword>
<accession>Q21NG8</accession>
<dbReference type="EMBL" id="CP000282">
    <property type="protein sequence ID" value="ABD79761.1"/>
    <property type="molecule type" value="Genomic_DNA"/>
</dbReference>
<dbReference type="RefSeq" id="WP_011466982.1">
    <property type="nucleotide sequence ID" value="NC_007912.1"/>
</dbReference>
<dbReference type="SMR" id="Q21NG8"/>
<dbReference type="STRING" id="203122.Sde_0497"/>
<dbReference type="GeneID" id="98612197"/>
<dbReference type="KEGG" id="sde:Sde_0497"/>
<dbReference type="eggNOG" id="COG1952">
    <property type="taxonomic scope" value="Bacteria"/>
</dbReference>
<dbReference type="HOGENOM" id="CLU_111574_1_0_6"/>
<dbReference type="OrthoDB" id="9795145at2"/>
<dbReference type="Proteomes" id="UP000001947">
    <property type="component" value="Chromosome"/>
</dbReference>
<dbReference type="GO" id="GO:0005737">
    <property type="term" value="C:cytoplasm"/>
    <property type="evidence" value="ECO:0007669"/>
    <property type="project" value="UniProtKB-SubCell"/>
</dbReference>
<dbReference type="GO" id="GO:0051082">
    <property type="term" value="F:unfolded protein binding"/>
    <property type="evidence" value="ECO:0007669"/>
    <property type="project" value="InterPro"/>
</dbReference>
<dbReference type="GO" id="GO:0006457">
    <property type="term" value="P:protein folding"/>
    <property type="evidence" value="ECO:0007669"/>
    <property type="project" value="UniProtKB-UniRule"/>
</dbReference>
<dbReference type="GO" id="GO:0051262">
    <property type="term" value="P:protein tetramerization"/>
    <property type="evidence" value="ECO:0007669"/>
    <property type="project" value="InterPro"/>
</dbReference>
<dbReference type="GO" id="GO:0015031">
    <property type="term" value="P:protein transport"/>
    <property type="evidence" value="ECO:0007669"/>
    <property type="project" value="UniProtKB-UniRule"/>
</dbReference>
<dbReference type="Gene3D" id="3.10.420.10">
    <property type="entry name" value="SecB-like"/>
    <property type="match status" value="1"/>
</dbReference>
<dbReference type="HAMAP" id="MF_00821">
    <property type="entry name" value="SecB"/>
    <property type="match status" value="1"/>
</dbReference>
<dbReference type="InterPro" id="IPR003708">
    <property type="entry name" value="SecB"/>
</dbReference>
<dbReference type="InterPro" id="IPR035958">
    <property type="entry name" value="SecB-like_sf"/>
</dbReference>
<dbReference type="NCBIfam" id="TIGR00809">
    <property type="entry name" value="secB"/>
    <property type="match status" value="1"/>
</dbReference>
<dbReference type="PANTHER" id="PTHR36918">
    <property type="match status" value="1"/>
</dbReference>
<dbReference type="PANTHER" id="PTHR36918:SF1">
    <property type="entry name" value="PROTEIN-EXPORT PROTEIN SECB"/>
    <property type="match status" value="1"/>
</dbReference>
<dbReference type="Pfam" id="PF02556">
    <property type="entry name" value="SecB"/>
    <property type="match status" value="1"/>
</dbReference>
<dbReference type="PRINTS" id="PR01594">
    <property type="entry name" value="SECBCHAPRONE"/>
</dbReference>
<dbReference type="SUPFAM" id="SSF54611">
    <property type="entry name" value="SecB-like"/>
    <property type="match status" value="1"/>
</dbReference>
<evidence type="ECO:0000255" key="1">
    <source>
        <dbReference type="HAMAP-Rule" id="MF_00821"/>
    </source>
</evidence>
<comment type="function">
    <text evidence="1">One of the proteins required for the normal export of preproteins out of the cell cytoplasm. It is a molecular chaperone that binds to a subset of precursor proteins, maintaining them in a translocation-competent state. It also specifically binds to its receptor SecA.</text>
</comment>
<comment type="subunit">
    <text evidence="1">Homotetramer, a dimer of dimers. One homotetramer interacts with 1 SecA dimer.</text>
</comment>
<comment type="subcellular location">
    <subcellularLocation>
        <location evidence="1">Cytoplasm</location>
    </subcellularLocation>
</comment>
<comment type="similarity">
    <text evidence="1">Belongs to the SecB family.</text>
</comment>